<comment type="function">
    <text evidence="1">One of the primary rRNA binding proteins, it binds directly to 16S rRNA where it helps nucleate assembly of the platform of the 30S subunit by binding and bridging several RNA helices of the 16S rRNA.</text>
</comment>
<comment type="function">
    <text evidence="1">Forms an intersubunit bridge (bridge B4) with the 23S rRNA of the 50S subunit in the ribosome.</text>
</comment>
<comment type="subunit">
    <text evidence="1">Part of the 30S ribosomal subunit. Forms a bridge to the 50S subunit in the 70S ribosome, contacting the 23S rRNA.</text>
</comment>
<comment type="similarity">
    <text evidence="1">Belongs to the universal ribosomal protein uS15 family.</text>
</comment>
<proteinExistence type="inferred from homology"/>
<keyword id="KW-0687">Ribonucleoprotein</keyword>
<keyword id="KW-0689">Ribosomal protein</keyword>
<keyword id="KW-0694">RNA-binding</keyword>
<keyword id="KW-0699">rRNA-binding</keyword>
<feature type="chain" id="PRO_0000115539" description="Small ribosomal subunit protein uS15">
    <location>
        <begin position="1"/>
        <end position="89"/>
    </location>
</feature>
<organism>
    <name type="scientific">Staphylococcus aureus (strain COL)</name>
    <dbReference type="NCBI Taxonomy" id="93062"/>
    <lineage>
        <taxon>Bacteria</taxon>
        <taxon>Bacillati</taxon>
        <taxon>Bacillota</taxon>
        <taxon>Bacilli</taxon>
        <taxon>Bacillales</taxon>
        <taxon>Staphylococcaceae</taxon>
        <taxon>Staphylococcus</taxon>
    </lineage>
</organism>
<dbReference type="EMBL" id="CP000046">
    <property type="protein sequence ID" value="AAW38123.1"/>
    <property type="molecule type" value="Genomic_DNA"/>
</dbReference>
<dbReference type="RefSeq" id="WP_001018328.1">
    <property type="nucleotide sequence ID" value="NZ_JBGOFO010000002.1"/>
</dbReference>
<dbReference type="SMR" id="Q5HGF8"/>
<dbReference type="KEGG" id="sac:SACOL1292"/>
<dbReference type="HOGENOM" id="CLU_148518_0_0_9"/>
<dbReference type="Proteomes" id="UP000000530">
    <property type="component" value="Chromosome"/>
</dbReference>
<dbReference type="GO" id="GO:0022627">
    <property type="term" value="C:cytosolic small ribosomal subunit"/>
    <property type="evidence" value="ECO:0007669"/>
    <property type="project" value="TreeGrafter"/>
</dbReference>
<dbReference type="GO" id="GO:0019843">
    <property type="term" value="F:rRNA binding"/>
    <property type="evidence" value="ECO:0007669"/>
    <property type="project" value="UniProtKB-UniRule"/>
</dbReference>
<dbReference type="GO" id="GO:0003735">
    <property type="term" value="F:structural constituent of ribosome"/>
    <property type="evidence" value="ECO:0007669"/>
    <property type="project" value="InterPro"/>
</dbReference>
<dbReference type="GO" id="GO:0006412">
    <property type="term" value="P:translation"/>
    <property type="evidence" value="ECO:0007669"/>
    <property type="project" value="UniProtKB-UniRule"/>
</dbReference>
<dbReference type="CDD" id="cd00353">
    <property type="entry name" value="Ribosomal_S15p_S13e"/>
    <property type="match status" value="1"/>
</dbReference>
<dbReference type="FunFam" id="1.10.287.10:FF:000002">
    <property type="entry name" value="30S ribosomal protein S15"/>
    <property type="match status" value="1"/>
</dbReference>
<dbReference type="Gene3D" id="6.10.250.3130">
    <property type="match status" value="1"/>
</dbReference>
<dbReference type="Gene3D" id="1.10.287.10">
    <property type="entry name" value="S15/NS1, RNA-binding"/>
    <property type="match status" value="1"/>
</dbReference>
<dbReference type="HAMAP" id="MF_01343_B">
    <property type="entry name" value="Ribosomal_uS15_B"/>
    <property type="match status" value="1"/>
</dbReference>
<dbReference type="InterPro" id="IPR000589">
    <property type="entry name" value="Ribosomal_uS15"/>
</dbReference>
<dbReference type="InterPro" id="IPR005290">
    <property type="entry name" value="Ribosomal_uS15_bac-type"/>
</dbReference>
<dbReference type="InterPro" id="IPR009068">
    <property type="entry name" value="uS15_NS1_RNA-bd_sf"/>
</dbReference>
<dbReference type="NCBIfam" id="TIGR00952">
    <property type="entry name" value="S15_bact"/>
    <property type="match status" value="1"/>
</dbReference>
<dbReference type="PANTHER" id="PTHR23321">
    <property type="entry name" value="RIBOSOMAL PROTEIN S15, BACTERIAL AND ORGANELLAR"/>
    <property type="match status" value="1"/>
</dbReference>
<dbReference type="PANTHER" id="PTHR23321:SF26">
    <property type="entry name" value="SMALL RIBOSOMAL SUBUNIT PROTEIN US15M"/>
    <property type="match status" value="1"/>
</dbReference>
<dbReference type="Pfam" id="PF00312">
    <property type="entry name" value="Ribosomal_S15"/>
    <property type="match status" value="1"/>
</dbReference>
<dbReference type="SMART" id="SM01387">
    <property type="entry name" value="Ribosomal_S15"/>
    <property type="match status" value="1"/>
</dbReference>
<dbReference type="SUPFAM" id="SSF47060">
    <property type="entry name" value="S15/NS1 RNA-binding domain"/>
    <property type="match status" value="1"/>
</dbReference>
<dbReference type="PROSITE" id="PS00362">
    <property type="entry name" value="RIBOSOMAL_S15"/>
    <property type="match status" value="1"/>
</dbReference>
<name>RS15_STAAC</name>
<gene>
    <name evidence="1" type="primary">rpsO</name>
    <name type="ordered locus">SACOL1292</name>
</gene>
<evidence type="ECO:0000255" key="1">
    <source>
        <dbReference type="HAMAP-Rule" id="MF_01343"/>
    </source>
</evidence>
<evidence type="ECO:0000305" key="2"/>
<accession>Q5HGF8</accession>
<sequence>MAISQERKNEIIKEYRVHETDTGSPEVQIAVLTAEINAVNEHLRTHKKDHHSRRGLLKMVGRRRHLLNYLRSKDIQRYRELIKSLGIRR</sequence>
<protein>
    <recommendedName>
        <fullName evidence="1">Small ribosomal subunit protein uS15</fullName>
    </recommendedName>
    <alternativeName>
        <fullName evidence="2">30S ribosomal protein S15</fullName>
    </alternativeName>
</protein>
<reference key="1">
    <citation type="journal article" date="2005" name="J. Bacteriol.">
        <title>Insights on evolution of virulence and resistance from the complete genome analysis of an early methicillin-resistant Staphylococcus aureus strain and a biofilm-producing methicillin-resistant Staphylococcus epidermidis strain.</title>
        <authorList>
            <person name="Gill S.R."/>
            <person name="Fouts D.E."/>
            <person name="Archer G.L."/>
            <person name="Mongodin E.F."/>
            <person name="DeBoy R.T."/>
            <person name="Ravel J."/>
            <person name="Paulsen I.T."/>
            <person name="Kolonay J.F."/>
            <person name="Brinkac L.M."/>
            <person name="Beanan M.J."/>
            <person name="Dodson R.J."/>
            <person name="Daugherty S.C."/>
            <person name="Madupu R."/>
            <person name="Angiuoli S.V."/>
            <person name="Durkin A.S."/>
            <person name="Haft D.H."/>
            <person name="Vamathevan J.J."/>
            <person name="Khouri H."/>
            <person name="Utterback T.R."/>
            <person name="Lee C."/>
            <person name="Dimitrov G."/>
            <person name="Jiang L."/>
            <person name="Qin H."/>
            <person name="Weidman J."/>
            <person name="Tran K."/>
            <person name="Kang K.H."/>
            <person name="Hance I.R."/>
            <person name="Nelson K.E."/>
            <person name="Fraser C.M."/>
        </authorList>
    </citation>
    <scope>NUCLEOTIDE SEQUENCE [LARGE SCALE GENOMIC DNA]</scope>
    <source>
        <strain>COL</strain>
    </source>
</reference>